<organism>
    <name type="scientific">Thermobifida cellulosilytica</name>
    <dbReference type="NCBI Taxonomy" id="144786"/>
    <lineage>
        <taxon>Bacteria</taxon>
        <taxon>Bacillati</taxon>
        <taxon>Actinomycetota</taxon>
        <taxon>Actinomycetes</taxon>
        <taxon>Streptosporangiales</taxon>
        <taxon>Nocardiopsidaceae</taxon>
        <taxon>Thermobifida</taxon>
    </lineage>
</organism>
<gene>
    <name evidence="7" type="primary">cut1</name>
</gene>
<reference evidence="13" key="1">
    <citation type="journal article" date="2011" name="Macromolecules">
        <title>Enzymatic Surface Hydrolysis of PET: Effect of Structural Diversity on Kinetic Properties of Cutinases from Thermobifida.</title>
        <authorList>
            <person name="Herrero-Acero E."/>
            <person name="Ribitsch D."/>
            <person name="Steinkellner G."/>
            <person name="Gruber K."/>
            <person name="Greimel K."/>
            <person name="Eiteljoerg I."/>
            <person name="Trotscha E."/>
            <person name="Wei R."/>
            <person name="Zimmermann W."/>
            <person name="Zinn M."/>
            <person name="Cavaco-Paulo A."/>
            <person name="Freddi G."/>
            <person name="Schwab H."/>
            <person name="Guebitz G."/>
        </authorList>
    </citation>
    <scope>NUCLEOTIDE SEQUENCE [GENOMIC DNA]</scope>
    <scope>FUNCTION</scope>
    <scope>CATALYTIC ACTIVITY</scope>
    <scope>BIOPHYSICOCHEMICAL PROPERTIES</scope>
    <scope>BIOTECHNOLOGY</scope>
</reference>
<reference evidence="8" key="2">
    <citation type="journal article" date="2013" name="Biomacromolecules">
        <title>Fusion of binding domains to Thermobifida cellulosilytica cutinase to tune sorption characteristics and enhancing PET hydrolysis.</title>
        <authorList>
            <person name="Ribitsch D."/>
            <person name="Yebra A.O."/>
            <person name="Zitzenbacher S."/>
            <person name="Wu J."/>
            <person name="Nowitsch S."/>
            <person name="Steinkellner G."/>
            <person name="Greimel K."/>
            <person name="Doliska A."/>
            <person name="Oberdorfer G."/>
            <person name="Gruber C.C."/>
            <person name="Gruber K."/>
            <person name="Schwab H."/>
            <person name="Stana-Kleinschek K."/>
            <person name="Acero E.H."/>
            <person name="Guebitz G.M."/>
        </authorList>
    </citation>
    <scope>FUNCTION</scope>
    <scope>CATALYTIC ACTIVITY</scope>
    <scope>BIOPHYSICOCHEMICAL PROPERTIES</scope>
    <scope>BIOTECHNOLOGY</scope>
</reference>
<reference evidence="8" key="3">
    <citation type="journal article" date="2013" name="Biotechnol. Bioeng.">
        <title>Surface engineering of a cutinase from Thermobifida cellulosilytica for improved polyester hydrolysis.</title>
        <authorList>
            <person name="Herrero Acero E."/>
            <person name="Ribitsch D."/>
            <person name="Dellacher A."/>
            <person name="Zitzenbacher S."/>
            <person name="Marold A."/>
            <person name="Steinkellner G."/>
            <person name="Gruber K."/>
            <person name="Schwab H."/>
            <person name="Guebitz G.M."/>
        </authorList>
    </citation>
    <scope>FUNCTION</scope>
    <scope>CATALYTIC ACTIVITY</scope>
    <scope>BIOPHYSICOCHEMICAL PROPERTIES</scope>
    <scope>BIOTECHNOLOGY</scope>
</reference>
<reference evidence="14" key="4">
    <citation type="journal article" date="2017" name="Biotechnol. Bioeng.">
        <title>Small cause, large effect: Structural characterization of cutinases from Thermobifida cellulosilytica.</title>
        <authorList>
            <person name="Ribitsch D."/>
            <person name="Hromic A."/>
            <person name="Zitzenbacher S."/>
            <person name="Zartl B."/>
            <person name="Gamerith C."/>
            <person name="Pellis A."/>
            <person name="Jungbauer A."/>
            <person name="Lyskowski A."/>
            <person name="Steinkellner G."/>
            <person name="Gruber K."/>
            <person name="Tscheliessnig R."/>
            <person name="Acero E.H."/>
            <person name="Guebitz G.M."/>
        </authorList>
    </citation>
    <scope>X-RAY CRYSTALLOGRAPHY (1.50 ANGSTROMS)</scope>
    <scope>FUNCTION</scope>
    <scope>CATALYTIC ACTIVITY</scope>
    <scope>DISULFIDE BONDS</scope>
    <scope>BIOTECHNOLOGY</scope>
</reference>
<sequence>MANPYERGPNPTDALLEASSGPFSVSEENVSRLSASGFGGGTIYYPRENNTYGAVAISPGYTGTEASIAWLGERIASHGFVVITIDTITTLDQPDSRAEQLNAALNHMINRASSTVRSRIDSSRLAVMGHSMGGGGTLRLASQRPDLKAAIPLTPWHLNKNWSSVTVPTLIIGADLDTIAPVATHAKPFYNSLPSSISKAYLELDGATHFAPNIPNKIIGKYSVAWLKRFVDNDTRYTQFLCPGPRDGLFGEVEEYRSTCPF</sequence>
<name>PETH1_THECS</name>
<accession>E9LVH8</accession>
<feature type="chain" id="PRO_0000455611" description="Cutinase 1">
    <location>
        <begin position="1" status="less than"/>
        <end position="262"/>
    </location>
</feature>
<feature type="active site" description="Nucleophile" evidence="1">
    <location>
        <position position="131"/>
    </location>
</feature>
<feature type="active site" description="Charge relay system" evidence="1">
    <location>
        <position position="177"/>
    </location>
</feature>
<feature type="active site" description="Charge relay system" evidence="1">
    <location>
        <position position="209"/>
    </location>
</feature>
<feature type="binding site" evidence="1">
    <location>
        <position position="61"/>
    </location>
    <ligand>
        <name>poly(ethylene terephthalate)</name>
        <dbReference type="ChEBI" id="CHEBI:131701"/>
    </ligand>
</feature>
<feature type="binding site" evidence="1">
    <location>
        <position position="132"/>
    </location>
    <ligand>
        <name>poly(ethylene terephthalate)</name>
        <dbReference type="ChEBI" id="CHEBI:131701"/>
    </ligand>
</feature>
<feature type="binding site" evidence="1">
    <location>
        <position position="156"/>
    </location>
    <ligand>
        <name>poly(ethylene terephthalate)</name>
        <dbReference type="ChEBI" id="CHEBI:131701"/>
    </ligand>
</feature>
<feature type="disulfide bond" evidence="5 14">
    <location>
        <begin position="242"/>
        <end position="260"/>
    </location>
</feature>
<feature type="non-terminal residue" evidence="13">
    <location>
        <position position="1"/>
    </location>
</feature>
<feature type="helix" evidence="15">
    <location>
        <begin position="13"/>
        <end position="17"/>
    </location>
</feature>
<feature type="strand" evidence="15">
    <location>
        <begin position="18"/>
        <end position="20"/>
    </location>
</feature>
<feature type="strand" evidence="15">
    <location>
        <begin position="25"/>
        <end position="30"/>
    </location>
</feature>
<feature type="turn" evidence="15">
    <location>
        <begin position="32"/>
        <end position="34"/>
    </location>
</feature>
<feature type="strand" evidence="15">
    <location>
        <begin position="36"/>
        <end position="38"/>
    </location>
</feature>
<feature type="strand" evidence="15">
    <location>
        <begin position="41"/>
        <end position="48"/>
    </location>
</feature>
<feature type="strand" evidence="15">
    <location>
        <begin position="52"/>
        <end position="58"/>
    </location>
</feature>
<feature type="helix" evidence="15">
    <location>
        <begin position="65"/>
        <end position="67"/>
    </location>
</feature>
<feature type="helix" evidence="15">
    <location>
        <begin position="69"/>
        <end position="76"/>
    </location>
</feature>
<feature type="turn" evidence="15">
    <location>
        <begin position="77"/>
        <end position="79"/>
    </location>
</feature>
<feature type="strand" evidence="15">
    <location>
        <begin position="81"/>
        <end position="85"/>
    </location>
</feature>
<feature type="helix" evidence="15">
    <location>
        <begin position="94"/>
        <end position="110"/>
    </location>
</feature>
<feature type="helix" evidence="15">
    <location>
        <begin position="114"/>
        <end position="117"/>
    </location>
</feature>
<feature type="strand" evidence="15">
    <location>
        <begin position="120"/>
        <end position="130"/>
    </location>
</feature>
<feature type="helix" evidence="15">
    <location>
        <begin position="132"/>
        <end position="143"/>
    </location>
</feature>
<feature type="strand" evidence="15">
    <location>
        <begin position="148"/>
        <end position="154"/>
    </location>
</feature>
<feature type="strand" evidence="15">
    <location>
        <begin position="169"/>
        <end position="174"/>
    </location>
</feature>
<feature type="strand" evidence="15">
    <location>
        <begin position="178"/>
        <end position="180"/>
    </location>
</feature>
<feature type="turn" evidence="15">
    <location>
        <begin position="182"/>
        <end position="185"/>
    </location>
</feature>
<feature type="helix" evidence="15">
    <location>
        <begin position="186"/>
        <end position="192"/>
    </location>
</feature>
<feature type="strand" evidence="15">
    <location>
        <begin position="199"/>
        <end position="204"/>
    </location>
</feature>
<feature type="helix" evidence="15">
    <location>
        <begin position="211"/>
        <end position="213"/>
    </location>
</feature>
<feature type="helix" evidence="15">
    <location>
        <begin position="217"/>
        <end position="231"/>
    </location>
</feature>
<feature type="helix" evidence="15">
    <location>
        <begin position="235"/>
        <end position="237"/>
    </location>
</feature>
<feature type="helix" evidence="15">
    <location>
        <begin position="238"/>
        <end position="241"/>
    </location>
</feature>
<feature type="turn" evidence="15">
    <location>
        <begin position="250"/>
        <end position="252"/>
    </location>
</feature>
<feature type="strand" evidence="15">
    <location>
        <begin position="253"/>
        <end position="258"/>
    </location>
</feature>
<keyword id="KW-0002">3D-structure</keyword>
<keyword id="KW-1015">Disulfide bond</keyword>
<keyword id="KW-0378">Hydrolase</keyword>
<keyword id="KW-0574">Periplasm</keyword>
<keyword id="KW-0964">Secreted</keyword>
<keyword id="KW-0719">Serine esterase</keyword>
<comment type="function">
    <text evidence="3 4 5 6">Catalyzes the hydrolysis of cutin, a polyester that forms the structure of plant cuticle (Ref.1). Shows esterase activity towards p-nitrophenol-linked aliphatic esters (pNP-aliphatic esters) (PubMed:23592055, PubMed:23718548, Ref.1). Capable of degrading the plastic poly(ethylene terephthalate) (PET), the most abundant polyester plastic in the world (PubMed:23592055, PubMed:23718548, Ref.1). Capable of degrading the bioplastic poly(lactic acid) (PLLA) (PubMed:28671263).</text>
</comment>
<comment type="catalytic activity">
    <reaction evidence="3 6 11">
        <text>(ethylene terephthalate)(n) + H2O = (ethylene terephthalate)(n-1) + 4-[(2-hydroxyethoxy)carbonyl]benzoate + H(+)</text>
        <dbReference type="Rhea" id="RHEA:49528"/>
        <dbReference type="Rhea" id="RHEA-COMP:12420"/>
        <dbReference type="Rhea" id="RHEA-COMP:12421"/>
        <dbReference type="ChEBI" id="CHEBI:15377"/>
        <dbReference type="ChEBI" id="CHEBI:15378"/>
        <dbReference type="ChEBI" id="CHEBI:131701"/>
        <dbReference type="ChEBI" id="CHEBI:131704"/>
        <dbReference type="EC" id="3.1.1.101"/>
    </reaction>
    <physiologicalReaction direction="left-to-right" evidence="3 6">
        <dbReference type="Rhea" id="RHEA:49529"/>
    </physiologicalReaction>
</comment>
<comment type="catalytic activity">
    <reaction evidence="3 4 6">
        <text>a butanoate ester + H2O = an aliphatic alcohol + butanoate + H(+)</text>
        <dbReference type="Rhea" id="RHEA:47348"/>
        <dbReference type="ChEBI" id="CHEBI:2571"/>
        <dbReference type="ChEBI" id="CHEBI:15377"/>
        <dbReference type="ChEBI" id="CHEBI:15378"/>
        <dbReference type="ChEBI" id="CHEBI:17968"/>
        <dbReference type="ChEBI" id="CHEBI:50477"/>
    </reaction>
    <physiologicalReaction direction="left-to-right" evidence="3 4 6">
        <dbReference type="Rhea" id="RHEA:47349"/>
    </physiologicalReaction>
</comment>
<comment type="catalytic activity">
    <reaction evidence="3 6">
        <text>an acetyl ester + H2O = an aliphatic alcohol + acetate + H(+)</text>
        <dbReference type="Rhea" id="RHEA:12957"/>
        <dbReference type="ChEBI" id="CHEBI:2571"/>
        <dbReference type="ChEBI" id="CHEBI:15377"/>
        <dbReference type="ChEBI" id="CHEBI:15378"/>
        <dbReference type="ChEBI" id="CHEBI:30089"/>
        <dbReference type="ChEBI" id="CHEBI:47622"/>
    </reaction>
    <physiologicalReaction direction="left-to-right" evidence="3 6">
        <dbReference type="Rhea" id="RHEA:12958"/>
    </physiologicalReaction>
</comment>
<comment type="catalytic activity">
    <reaction evidence="9 11 12">
        <text>cutin + H2O = cutin monomers.</text>
        <dbReference type="EC" id="3.1.1.74"/>
    </reaction>
</comment>
<comment type="biophysicochemical properties">
    <kinetics>
        <KM evidence="6">127 uM for pNP-acetate (at 25 degrees Celsius and pH 7)</KM>
        <KM evidence="3">1.5 mM for pNP-acetate (at 25 degrees Celsius and pH 7)</KM>
        <KM evidence="6">1483 uM for pNP-butanoate (at 25 degrees Celsius and pH 7)</KM>
        <KM evidence="4">800 uM for pNP-butanoate</KM>
        <KM evidence="3">800 uM for pNP-butanoate (at 25 degrees Celsius and pH 7)</KM>
        <text evidence="3 4 6">kcat is 211.9 sec(-1) with pNP-acetate as substrate (at 25 degrees Celsius and pH 7) (Ref.1). kcat is 436 sec(-1) with pNP-acetate as substrate (at 25 degrees Celsius and pH 7) (PubMed:23592055). kcat is 195.1 sec(-1) with pNP-butanoate as substrate (at 25 degrees Celsius and pH 7) (Ref.1). kcat is 325 sec(-1) with pNP-butanoate as substrate (PubMed:23718548). kcat is 327 sec(-1) with pNP-butanoate as substrate (at 25 degrees Celsius and pH 7) (Ref.1).</text>
    </kinetics>
</comment>
<comment type="subcellular location">
    <subcellularLocation>
        <location evidence="2">Secreted</location>
    </subcellularLocation>
    <subcellularLocation>
        <location evidence="2">Periplasm</location>
    </subcellularLocation>
</comment>
<comment type="biotechnology">
    <text evidence="3 4 5 6">Has potential for application in biological recycling of plastic waste products.</text>
</comment>
<comment type="similarity">
    <text evidence="8">Belongs to the AB hydrolase superfamily.</text>
</comment>
<protein>
    <recommendedName>
        <fullName evidence="7">Cutinase 1</fullName>
        <ecNumber evidence="9 10 11 12">3.1.1.74</ecNumber>
    </recommendedName>
    <alternativeName>
        <fullName evidence="8">Poly(ethylene terephthalate) hydrolase</fullName>
        <shortName evidence="8">PET hydrolase</shortName>
        <shortName evidence="8">PETase</shortName>
        <ecNumber evidence="3 4 6 11">3.1.1.101</ecNumber>
    </alternativeName>
</protein>
<dbReference type="EC" id="3.1.1.74" evidence="9 10 11 12"/>
<dbReference type="EC" id="3.1.1.101" evidence="3 4 6 11"/>
<dbReference type="EMBL" id="HQ147785">
    <property type="protein sequence ID" value="ADV92526.1"/>
    <property type="molecule type" value="Genomic_DNA"/>
</dbReference>
<dbReference type="PDB" id="5LUI">
    <property type="method" value="X-ray"/>
    <property type="resolution" value="1.50 A"/>
    <property type="chains" value="A=1-262"/>
</dbReference>
<dbReference type="PDBsum" id="5LUI"/>
<dbReference type="SMR" id="E9LVH8"/>
<dbReference type="ESTHER" id="thefu-q6a0i4">
    <property type="family name" value="Polyesterase-lipase-cutinase"/>
</dbReference>
<dbReference type="BRENDA" id="3.1.1.101">
    <property type="organism ID" value="12709"/>
</dbReference>
<dbReference type="BRENDA" id="3.1.1.74">
    <property type="organism ID" value="12709"/>
</dbReference>
<dbReference type="SABIO-RK" id="E9LVH8"/>
<dbReference type="GO" id="GO:0005576">
    <property type="term" value="C:extracellular region"/>
    <property type="evidence" value="ECO:0007669"/>
    <property type="project" value="UniProtKB-SubCell"/>
</dbReference>
<dbReference type="GO" id="GO:0042597">
    <property type="term" value="C:periplasmic space"/>
    <property type="evidence" value="ECO:0007669"/>
    <property type="project" value="UniProtKB-SubCell"/>
</dbReference>
<dbReference type="GO" id="GO:0050525">
    <property type="term" value="F:cutinase activity"/>
    <property type="evidence" value="ECO:0007669"/>
    <property type="project" value="UniProtKB-ARBA"/>
</dbReference>
<dbReference type="Gene3D" id="3.40.50.1820">
    <property type="entry name" value="alpha/beta hydrolase"/>
    <property type="match status" value="1"/>
</dbReference>
<dbReference type="InterPro" id="IPR029058">
    <property type="entry name" value="AB_hydrolase_fold"/>
</dbReference>
<dbReference type="InterPro" id="IPR050261">
    <property type="entry name" value="FrsA_esterase"/>
</dbReference>
<dbReference type="InterPro" id="IPR041127">
    <property type="entry name" value="PET_hydrolase/cutinase-like"/>
</dbReference>
<dbReference type="PANTHER" id="PTHR22946">
    <property type="entry name" value="DIENELACTONE HYDROLASE DOMAIN-CONTAINING PROTEIN-RELATED"/>
    <property type="match status" value="1"/>
</dbReference>
<dbReference type="PANTHER" id="PTHR22946:SF9">
    <property type="entry name" value="POLYKETIDE TRANSFERASE AF380"/>
    <property type="match status" value="1"/>
</dbReference>
<dbReference type="Pfam" id="PF12740">
    <property type="entry name" value="PETase"/>
    <property type="match status" value="1"/>
</dbReference>
<dbReference type="SUPFAM" id="SSF53474">
    <property type="entry name" value="alpha/beta-Hydrolases"/>
    <property type="match status" value="1"/>
</dbReference>
<proteinExistence type="evidence at protein level"/>
<evidence type="ECO:0000250" key="1">
    <source>
        <dbReference type="UniProtKB" id="A0A0K8P6T7"/>
    </source>
</evidence>
<evidence type="ECO:0000250" key="2">
    <source>
        <dbReference type="UniProtKB" id="G8GER6"/>
    </source>
</evidence>
<evidence type="ECO:0000269" key="3">
    <source>
    </source>
</evidence>
<evidence type="ECO:0000269" key="4">
    <source>
    </source>
</evidence>
<evidence type="ECO:0000269" key="5">
    <source>
    </source>
</evidence>
<evidence type="ECO:0000269" key="6">
    <source ref="1"/>
</evidence>
<evidence type="ECO:0000303" key="7">
    <source ref="1"/>
</evidence>
<evidence type="ECO:0000305" key="8"/>
<evidence type="ECO:0000305" key="9">
    <source>
    </source>
</evidence>
<evidence type="ECO:0000305" key="10">
    <source>
    </source>
</evidence>
<evidence type="ECO:0000305" key="11">
    <source>
    </source>
</evidence>
<evidence type="ECO:0000305" key="12">
    <source ref="1"/>
</evidence>
<evidence type="ECO:0000312" key="13">
    <source>
        <dbReference type="EMBL" id="ADV92526.1"/>
    </source>
</evidence>
<evidence type="ECO:0007744" key="14">
    <source>
        <dbReference type="PDB" id="5LUI"/>
    </source>
</evidence>
<evidence type="ECO:0007829" key="15">
    <source>
        <dbReference type="PDB" id="5LUI"/>
    </source>
</evidence>